<protein>
    <recommendedName>
        <fullName evidence="1">S-adenosylmethionine synthase</fullName>
        <shortName evidence="1">AdoMet synthase</shortName>
        <ecNumber evidence="1">2.5.1.6</ecNumber>
    </recommendedName>
    <alternativeName>
        <fullName evidence="1">MAT</fullName>
    </alternativeName>
    <alternativeName>
        <fullName evidence="1">Methionine adenosyltransferase</fullName>
    </alternativeName>
</protein>
<evidence type="ECO:0000255" key="1">
    <source>
        <dbReference type="HAMAP-Rule" id="MF_00086"/>
    </source>
</evidence>
<sequence length="407" mass="43271">MSRYVFTSESVTEGHPDKICDQVSDAVLDALLAQDPASRVACETVVNTGLCIITGEVTTTARVDFNTLVRGVIADIGYSSAKAGGFDANSCAVLVALDQQSPDIAQGVDEADDHAGDPLDKVGAGDQGIMFGYACDETPELMPLPISLAHRLARRLAEVRHNGTLGYLLPDGKTQVSVVYEDDQPVAIDTILISTQHIAEIDGISDEKGLRERISADLWTHVVEPATADLSLKPSKDTTKYLVNPTGKFVVGGPQGDAGLTGRKIIVDTYGGYARHGGGAFSGKDPTKVDRSAAYAARFVAKALVAAGLARKAEVQLSYAIGVAKPVSILVESFGTSSHSNDELTELVNANFDLRPGAIIENFKLRNLPQQRGGNFYREVAAYGHFGRSDLNLPWEDVSVIAAKLKG</sequence>
<gene>
    <name evidence="1" type="primary">metK</name>
    <name type="ordered locus">SynRCC307_0413</name>
</gene>
<keyword id="KW-0067">ATP-binding</keyword>
<keyword id="KW-0963">Cytoplasm</keyword>
<keyword id="KW-0460">Magnesium</keyword>
<keyword id="KW-0479">Metal-binding</keyword>
<keyword id="KW-0547">Nucleotide-binding</keyword>
<keyword id="KW-0554">One-carbon metabolism</keyword>
<keyword id="KW-0630">Potassium</keyword>
<keyword id="KW-1185">Reference proteome</keyword>
<keyword id="KW-0808">Transferase</keyword>
<name>METK_SYNR3</name>
<proteinExistence type="inferred from homology"/>
<feature type="chain" id="PRO_1000007959" description="S-adenosylmethionine synthase">
    <location>
        <begin position="1"/>
        <end position="407"/>
    </location>
</feature>
<feature type="region of interest" description="Flexible loop" evidence="1">
    <location>
        <begin position="100"/>
        <end position="110"/>
    </location>
</feature>
<feature type="binding site" description="in other chain" evidence="1">
    <location>
        <position position="15"/>
    </location>
    <ligand>
        <name>ATP</name>
        <dbReference type="ChEBI" id="CHEBI:30616"/>
        <note>ligand shared between two neighboring subunits</note>
    </ligand>
</feature>
<feature type="binding site" evidence="1">
    <location>
        <position position="17"/>
    </location>
    <ligand>
        <name>Mg(2+)</name>
        <dbReference type="ChEBI" id="CHEBI:18420"/>
    </ligand>
</feature>
<feature type="binding site" evidence="1">
    <location>
        <position position="43"/>
    </location>
    <ligand>
        <name>K(+)</name>
        <dbReference type="ChEBI" id="CHEBI:29103"/>
    </ligand>
</feature>
<feature type="binding site" description="in other chain" evidence="1">
    <location>
        <position position="56"/>
    </location>
    <ligand>
        <name>L-methionine</name>
        <dbReference type="ChEBI" id="CHEBI:57844"/>
        <note>ligand shared between two neighboring subunits</note>
    </ligand>
</feature>
<feature type="binding site" description="in other chain" evidence="1">
    <location>
        <position position="100"/>
    </location>
    <ligand>
        <name>L-methionine</name>
        <dbReference type="ChEBI" id="CHEBI:57844"/>
        <note>ligand shared between two neighboring subunits</note>
    </ligand>
</feature>
<feature type="binding site" description="in other chain" evidence="1">
    <location>
        <begin position="171"/>
        <end position="173"/>
    </location>
    <ligand>
        <name>ATP</name>
        <dbReference type="ChEBI" id="CHEBI:30616"/>
        <note>ligand shared between two neighboring subunits</note>
    </ligand>
</feature>
<feature type="binding site" description="in other chain" evidence="1">
    <location>
        <begin position="248"/>
        <end position="249"/>
    </location>
    <ligand>
        <name>ATP</name>
        <dbReference type="ChEBI" id="CHEBI:30616"/>
        <note>ligand shared between two neighboring subunits</note>
    </ligand>
</feature>
<feature type="binding site" evidence="1">
    <location>
        <position position="257"/>
    </location>
    <ligand>
        <name>ATP</name>
        <dbReference type="ChEBI" id="CHEBI:30616"/>
        <note>ligand shared between two neighboring subunits</note>
    </ligand>
</feature>
<feature type="binding site" evidence="1">
    <location>
        <position position="257"/>
    </location>
    <ligand>
        <name>L-methionine</name>
        <dbReference type="ChEBI" id="CHEBI:57844"/>
        <note>ligand shared between two neighboring subunits</note>
    </ligand>
</feature>
<feature type="binding site" description="in other chain" evidence="1">
    <location>
        <begin position="263"/>
        <end position="264"/>
    </location>
    <ligand>
        <name>ATP</name>
        <dbReference type="ChEBI" id="CHEBI:30616"/>
        <note>ligand shared between two neighboring subunits</note>
    </ligand>
</feature>
<feature type="binding site" evidence="1">
    <location>
        <position position="280"/>
    </location>
    <ligand>
        <name>ATP</name>
        <dbReference type="ChEBI" id="CHEBI:30616"/>
        <note>ligand shared between two neighboring subunits</note>
    </ligand>
</feature>
<feature type="binding site" evidence="1">
    <location>
        <position position="284"/>
    </location>
    <ligand>
        <name>ATP</name>
        <dbReference type="ChEBI" id="CHEBI:30616"/>
        <note>ligand shared between two neighboring subunits</note>
    </ligand>
</feature>
<feature type="binding site" description="in other chain" evidence="1">
    <location>
        <position position="288"/>
    </location>
    <ligand>
        <name>L-methionine</name>
        <dbReference type="ChEBI" id="CHEBI:57844"/>
        <note>ligand shared between two neighboring subunits</note>
    </ligand>
</feature>
<dbReference type="EC" id="2.5.1.6" evidence="1"/>
<dbReference type="EMBL" id="CT978603">
    <property type="protein sequence ID" value="CAK27316.1"/>
    <property type="molecule type" value="Genomic_DNA"/>
</dbReference>
<dbReference type="SMR" id="A5GR07"/>
<dbReference type="STRING" id="316278.SynRCC307_0413"/>
<dbReference type="KEGG" id="syr:SynRCC307_0413"/>
<dbReference type="eggNOG" id="COG0192">
    <property type="taxonomic scope" value="Bacteria"/>
</dbReference>
<dbReference type="HOGENOM" id="CLU_041802_1_1_3"/>
<dbReference type="OrthoDB" id="9801686at2"/>
<dbReference type="UniPathway" id="UPA00315">
    <property type="reaction ID" value="UER00080"/>
</dbReference>
<dbReference type="Proteomes" id="UP000001115">
    <property type="component" value="Chromosome"/>
</dbReference>
<dbReference type="GO" id="GO:0005737">
    <property type="term" value="C:cytoplasm"/>
    <property type="evidence" value="ECO:0007669"/>
    <property type="project" value="UniProtKB-SubCell"/>
</dbReference>
<dbReference type="GO" id="GO:0005524">
    <property type="term" value="F:ATP binding"/>
    <property type="evidence" value="ECO:0007669"/>
    <property type="project" value="UniProtKB-UniRule"/>
</dbReference>
<dbReference type="GO" id="GO:0000287">
    <property type="term" value="F:magnesium ion binding"/>
    <property type="evidence" value="ECO:0007669"/>
    <property type="project" value="UniProtKB-UniRule"/>
</dbReference>
<dbReference type="GO" id="GO:0004478">
    <property type="term" value="F:methionine adenosyltransferase activity"/>
    <property type="evidence" value="ECO:0007669"/>
    <property type="project" value="UniProtKB-UniRule"/>
</dbReference>
<dbReference type="GO" id="GO:0006730">
    <property type="term" value="P:one-carbon metabolic process"/>
    <property type="evidence" value="ECO:0007669"/>
    <property type="project" value="UniProtKB-KW"/>
</dbReference>
<dbReference type="GO" id="GO:0006556">
    <property type="term" value="P:S-adenosylmethionine biosynthetic process"/>
    <property type="evidence" value="ECO:0007669"/>
    <property type="project" value="UniProtKB-UniRule"/>
</dbReference>
<dbReference type="CDD" id="cd18079">
    <property type="entry name" value="S-AdoMet_synt"/>
    <property type="match status" value="1"/>
</dbReference>
<dbReference type="FunFam" id="3.30.300.10:FF:000003">
    <property type="entry name" value="S-adenosylmethionine synthase"/>
    <property type="match status" value="1"/>
</dbReference>
<dbReference type="FunFam" id="3.30.300.10:FF:000011">
    <property type="entry name" value="S-adenosylmethionine synthase"/>
    <property type="match status" value="1"/>
</dbReference>
<dbReference type="Gene3D" id="3.30.300.10">
    <property type="match status" value="3"/>
</dbReference>
<dbReference type="HAMAP" id="MF_00086">
    <property type="entry name" value="S_AdoMet_synth1"/>
    <property type="match status" value="1"/>
</dbReference>
<dbReference type="InterPro" id="IPR022631">
    <property type="entry name" value="ADOMET_SYNTHASE_CS"/>
</dbReference>
<dbReference type="InterPro" id="IPR022630">
    <property type="entry name" value="S-AdoMet_synt_C"/>
</dbReference>
<dbReference type="InterPro" id="IPR022629">
    <property type="entry name" value="S-AdoMet_synt_central"/>
</dbReference>
<dbReference type="InterPro" id="IPR022628">
    <property type="entry name" value="S-AdoMet_synt_N"/>
</dbReference>
<dbReference type="InterPro" id="IPR002133">
    <property type="entry name" value="S-AdoMet_synthetase"/>
</dbReference>
<dbReference type="InterPro" id="IPR022636">
    <property type="entry name" value="S-AdoMet_synthetase_sfam"/>
</dbReference>
<dbReference type="NCBIfam" id="TIGR01034">
    <property type="entry name" value="metK"/>
    <property type="match status" value="1"/>
</dbReference>
<dbReference type="PANTHER" id="PTHR11964">
    <property type="entry name" value="S-ADENOSYLMETHIONINE SYNTHETASE"/>
    <property type="match status" value="1"/>
</dbReference>
<dbReference type="Pfam" id="PF02773">
    <property type="entry name" value="S-AdoMet_synt_C"/>
    <property type="match status" value="1"/>
</dbReference>
<dbReference type="Pfam" id="PF02772">
    <property type="entry name" value="S-AdoMet_synt_M"/>
    <property type="match status" value="1"/>
</dbReference>
<dbReference type="Pfam" id="PF00438">
    <property type="entry name" value="S-AdoMet_synt_N"/>
    <property type="match status" value="1"/>
</dbReference>
<dbReference type="PIRSF" id="PIRSF000497">
    <property type="entry name" value="MAT"/>
    <property type="match status" value="1"/>
</dbReference>
<dbReference type="SUPFAM" id="SSF55973">
    <property type="entry name" value="S-adenosylmethionine synthetase"/>
    <property type="match status" value="3"/>
</dbReference>
<dbReference type="PROSITE" id="PS00376">
    <property type="entry name" value="ADOMET_SYNTHASE_1"/>
    <property type="match status" value="1"/>
</dbReference>
<dbReference type="PROSITE" id="PS00377">
    <property type="entry name" value="ADOMET_SYNTHASE_2"/>
    <property type="match status" value="1"/>
</dbReference>
<organism>
    <name type="scientific">Synechococcus sp. (strain RCC307)</name>
    <dbReference type="NCBI Taxonomy" id="316278"/>
    <lineage>
        <taxon>Bacteria</taxon>
        <taxon>Bacillati</taxon>
        <taxon>Cyanobacteriota</taxon>
        <taxon>Cyanophyceae</taxon>
        <taxon>Synechococcales</taxon>
        <taxon>Synechococcaceae</taxon>
        <taxon>Synechococcus</taxon>
    </lineage>
</organism>
<reference key="1">
    <citation type="submission" date="2006-05" db="EMBL/GenBank/DDBJ databases">
        <authorList>
            <consortium name="Genoscope"/>
        </authorList>
    </citation>
    <scope>NUCLEOTIDE SEQUENCE [LARGE SCALE GENOMIC DNA]</scope>
    <source>
        <strain>RCC307</strain>
    </source>
</reference>
<accession>A5GR07</accession>
<comment type="function">
    <text evidence="1">Catalyzes the formation of S-adenosylmethionine (AdoMet) from methionine and ATP. The overall synthetic reaction is composed of two sequential steps, AdoMet formation and the subsequent tripolyphosphate hydrolysis which occurs prior to release of AdoMet from the enzyme.</text>
</comment>
<comment type="catalytic activity">
    <reaction evidence="1">
        <text>L-methionine + ATP + H2O = S-adenosyl-L-methionine + phosphate + diphosphate</text>
        <dbReference type="Rhea" id="RHEA:21080"/>
        <dbReference type="ChEBI" id="CHEBI:15377"/>
        <dbReference type="ChEBI" id="CHEBI:30616"/>
        <dbReference type="ChEBI" id="CHEBI:33019"/>
        <dbReference type="ChEBI" id="CHEBI:43474"/>
        <dbReference type="ChEBI" id="CHEBI:57844"/>
        <dbReference type="ChEBI" id="CHEBI:59789"/>
        <dbReference type="EC" id="2.5.1.6"/>
    </reaction>
</comment>
<comment type="cofactor">
    <cofactor evidence="1">
        <name>Mg(2+)</name>
        <dbReference type="ChEBI" id="CHEBI:18420"/>
    </cofactor>
    <text evidence="1">Binds 2 divalent ions per subunit.</text>
</comment>
<comment type="cofactor">
    <cofactor evidence="1">
        <name>K(+)</name>
        <dbReference type="ChEBI" id="CHEBI:29103"/>
    </cofactor>
    <text evidence="1">Binds 1 potassium ion per subunit.</text>
</comment>
<comment type="pathway">
    <text evidence="1">Amino-acid biosynthesis; S-adenosyl-L-methionine biosynthesis; S-adenosyl-L-methionine from L-methionine: step 1/1.</text>
</comment>
<comment type="subunit">
    <text evidence="1">Homotetramer; dimer of dimers.</text>
</comment>
<comment type="subcellular location">
    <subcellularLocation>
        <location evidence="1">Cytoplasm</location>
    </subcellularLocation>
</comment>
<comment type="similarity">
    <text evidence="1">Belongs to the AdoMet synthase family.</text>
</comment>